<keyword id="KW-0963">Cytoplasm</keyword>
<keyword id="KW-0251">Elongation factor</keyword>
<keyword id="KW-0342">GTP-binding</keyword>
<keyword id="KW-0547">Nucleotide-binding</keyword>
<keyword id="KW-0648">Protein biosynthesis</keyword>
<keyword id="KW-1185">Reference proteome</keyword>
<feature type="chain" id="PRO_1000091749" description="Elongation factor G">
    <location>
        <begin position="1"/>
        <end position="691"/>
    </location>
</feature>
<feature type="domain" description="tr-type G">
    <location>
        <begin position="8"/>
        <end position="282"/>
    </location>
</feature>
<feature type="binding site" evidence="1">
    <location>
        <begin position="17"/>
        <end position="24"/>
    </location>
    <ligand>
        <name>GTP</name>
        <dbReference type="ChEBI" id="CHEBI:37565"/>
    </ligand>
</feature>
<feature type="binding site" evidence="1">
    <location>
        <begin position="81"/>
        <end position="85"/>
    </location>
    <ligand>
        <name>GTP</name>
        <dbReference type="ChEBI" id="CHEBI:37565"/>
    </ligand>
</feature>
<feature type="binding site" evidence="1">
    <location>
        <begin position="135"/>
        <end position="138"/>
    </location>
    <ligand>
        <name>GTP</name>
        <dbReference type="ChEBI" id="CHEBI:37565"/>
    </ligand>
</feature>
<proteinExistence type="inferred from homology"/>
<name>EFG_PROM4</name>
<comment type="function">
    <text evidence="1">Catalyzes the GTP-dependent ribosomal translocation step during translation elongation. During this step, the ribosome changes from the pre-translocational (PRE) to the post-translocational (POST) state as the newly formed A-site-bound peptidyl-tRNA and P-site-bound deacylated tRNA move to the P and E sites, respectively. Catalyzes the coordinated movement of the two tRNA molecules, the mRNA and conformational changes in the ribosome.</text>
</comment>
<comment type="subcellular location">
    <subcellularLocation>
        <location evidence="1">Cytoplasm</location>
    </subcellularLocation>
</comment>
<comment type="similarity">
    <text evidence="1">Belongs to the TRAFAC class translation factor GTPase superfamily. Classic translation factor GTPase family. EF-G/EF-2 subfamily.</text>
</comment>
<accession>A9BCK1</accession>
<evidence type="ECO:0000255" key="1">
    <source>
        <dbReference type="HAMAP-Rule" id="MF_00054"/>
    </source>
</evidence>
<reference key="1">
    <citation type="journal article" date="2007" name="PLoS Genet.">
        <title>Patterns and implications of gene gain and loss in the evolution of Prochlorococcus.</title>
        <authorList>
            <person name="Kettler G.C."/>
            <person name="Martiny A.C."/>
            <person name="Huang K."/>
            <person name="Zucker J."/>
            <person name="Coleman M.L."/>
            <person name="Rodrigue S."/>
            <person name="Chen F."/>
            <person name="Lapidus A."/>
            <person name="Ferriera S."/>
            <person name="Johnson J."/>
            <person name="Steglich C."/>
            <person name="Church G.M."/>
            <person name="Richardson P."/>
            <person name="Chisholm S.W."/>
        </authorList>
    </citation>
    <scope>NUCLEOTIDE SEQUENCE [LARGE SCALE GENOMIC DNA]</scope>
    <source>
        <strain>MIT 9211</strain>
    </source>
</reference>
<sequence length="691" mass="75402">MARPFPLERVRNIGIAAHIDAGKTTTTERILFYSGVVHKIGEVHDGAAVTDWMAQERERGITITAAAISTSWQDHRINIIDTPGHVDFTIEVERSMRVLDGVIAVFCAVGGVQPQSETVWRQADRYSVPRMVFVNKMDRTGADFLKVYGQIKDRLKANAAPIQLPIGAEGDLSGIIDLVANKAYIYKNDLGTDIEESDIPADMASEAAEWRAKLMETVAETDEELIEQFLENGELTEQQLKKGIREGVLKHGLVPLLCGSAFKNKGVQLVLDAVVDYLPAPVDVPPIQGVLPNGEEAVRPSDDSEPFSALAFKVMADPYGKLTFVRMYSGVLEKGSYVTNSTKDIKERISRLVVLKADDREEVDQLRAGDLGAVLGLKNTTTGDTLCTTDEPIVLETLFIPEPVISVAVEPKTKGDMEKLSKALVSLAEEDPTFRVSTDQETNQTVIAGMGELHLEILVDRMLREFKVEANIGAPQVSYRETIRSSSKGEGKFARQTGGKGQYGHVVIEMEPGEPGTGFEFVNKIVGGVVPKEYIGPASNGMKETCESGVLAGYPLIDVKVTMVDGSFHDVDSSEMAFKIAGSMAFKDGVKKCNPVLLEPMMKVEVETPEDFLGSIIGDLSSRRGQVEGQSIDDGQSKVQAKVPLAEMFGYATQLRSMTQGRGIFSMEFSNYEEVPRNVAEAIISKNQGNS</sequence>
<organism>
    <name type="scientific">Prochlorococcus marinus (strain MIT 9211)</name>
    <dbReference type="NCBI Taxonomy" id="93059"/>
    <lineage>
        <taxon>Bacteria</taxon>
        <taxon>Bacillati</taxon>
        <taxon>Cyanobacteriota</taxon>
        <taxon>Cyanophyceae</taxon>
        <taxon>Synechococcales</taxon>
        <taxon>Prochlorococcaceae</taxon>
        <taxon>Prochlorococcus</taxon>
    </lineage>
</organism>
<gene>
    <name evidence="1" type="primary">fusA</name>
    <name type="ordered locus">P9211_16321</name>
</gene>
<dbReference type="EMBL" id="CP000878">
    <property type="protein sequence ID" value="ABX09563.1"/>
    <property type="molecule type" value="Genomic_DNA"/>
</dbReference>
<dbReference type="RefSeq" id="WP_012196184.1">
    <property type="nucleotide sequence ID" value="NC_009976.1"/>
</dbReference>
<dbReference type="SMR" id="A9BCK1"/>
<dbReference type="STRING" id="93059.P9211_16321"/>
<dbReference type="KEGG" id="pmj:P9211_16321"/>
<dbReference type="eggNOG" id="COG0480">
    <property type="taxonomic scope" value="Bacteria"/>
</dbReference>
<dbReference type="HOGENOM" id="CLU_002794_4_1_3"/>
<dbReference type="OrthoDB" id="580826at2"/>
<dbReference type="Proteomes" id="UP000000788">
    <property type="component" value="Chromosome"/>
</dbReference>
<dbReference type="GO" id="GO:0005737">
    <property type="term" value="C:cytoplasm"/>
    <property type="evidence" value="ECO:0007669"/>
    <property type="project" value="UniProtKB-SubCell"/>
</dbReference>
<dbReference type="GO" id="GO:0005525">
    <property type="term" value="F:GTP binding"/>
    <property type="evidence" value="ECO:0007669"/>
    <property type="project" value="UniProtKB-UniRule"/>
</dbReference>
<dbReference type="GO" id="GO:0003924">
    <property type="term" value="F:GTPase activity"/>
    <property type="evidence" value="ECO:0007669"/>
    <property type="project" value="InterPro"/>
</dbReference>
<dbReference type="GO" id="GO:0003746">
    <property type="term" value="F:translation elongation factor activity"/>
    <property type="evidence" value="ECO:0007669"/>
    <property type="project" value="UniProtKB-UniRule"/>
</dbReference>
<dbReference type="GO" id="GO:0032790">
    <property type="term" value="P:ribosome disassembly"/>
    <property type="evidence" value="ECO:0007669"/>
    <property type="project" value="TreeGrafter"/>
</dbReference>
<dbReference type="CDD" id="cd01886">
    <property type="entry name" value="EF-G"/>
    <property type="match status" value="1"/>
</dbReference>
<dbReference type="CDD" id="cd16262">
    <property type="entry name" value="EFG_III"/>
    <property type="match status" value="1"/>
</dbReference>
<dbReference type="CDD" id="cd01434">
    <property type="entry name" value="EFG_mtEFG1_IV"/>
    <property type="match status" value="1"/>
</dbReference>
<dbReference type="CDD" id="cd03713">
    <property type="entry name" value="EFG_mtEFG_C"/>
    <property type="match status" value="1"/>
</dbReference>
<dbReference type="CDD" id="cd04088">
    <property type="entry name" value="EFG_mtEFG_II"/>
    <property type="match status" value="1"/>
</dbReference>
<dbReference type="FunFam" id="2.40.30.10:FF:000006">
    <property type="entry name" value="Elongation factor G"/>
    <property type="match status" value="1"/>
</dbReference>
<dbReference type="FunFam" id="3.30.230.10:FF:000003">
    <property type="entry name" value="Elongation factor G"/>
    <property type="match status" value="1"/>
</dbReference>
<dbReference type="FunFam" id="3.30.70.240:FF:000001">
    <property type="entry name" value="Elongation factor G"/>
    <property type="match status" value="1"/>
</dbReference>
<dbReference type="FunFam" id="3.30.70.870:FF:000001">
    <property type="entry name" value="Elongation factor G"/>
    <property type="match status" value="1"/>
</dbReference>
<dbReference type="FunFam" id="3.40.50.300:FF:000029">
    <property type="entry name" value="Elongation factor G"/>
    <property type="match status" value="1"/>
</dbReference>
<dbReference type="Gene3D" id="3.30.230.10">
    <property type="match status" value="1"/>
</dbReference>
<dbReference type="Gene3D" id="3.30.70.240">
    <property type="match status" value="1"/>
</dbReference>
<dbReference type="Gene3D" id="3.30.70.870">
    <property type="entry name" value="Elongation Factor G (Translational Gtpase), domain 3"/>
    <property type="match status" value="1"/>
</dbReference>
<dbReference type="Gene3D" id="3.40.50.300">
    <property type="entry name" value="P-loop containing nucleotide triphosphate hydrolases"/>
    <property type="match status" value="1"/>
</dbReference>
<dbReference type="Gene3D" id="2.40.30.10">
    <property type="entry name" value="Translation factors"/>
    <property type="match status" value="1"/>
</dbReference>
<dbReference type="HAMAP" id="MF_00054_B">
    <property type="entry name" value="EF_G_EF_2_B"/>
    <property type="match status" value="1"/>
</dbReference>
<dbReference type="InterPro" id="IPR041095">
    <property type="entry name" value="EFG_II"/>
</dbReference>
<dbReference type="InterPro" id="IPR009022">
    <property type="entry name" value="EFG_III"/>
</dbReference>
<dbReference type="InterPro" id="IPR035647">
    <property type="entry name" value="EFG_III/V"/>
</dbReference>
<dbReference type="InterPro" id="IPR047872">
    <property type="entry name" value="EFG_IV"/>
</dbReference>
<dbReference type="InterPro" id="IPR035649">
    <property type="entry name" value="EFG_V"/>
</dbReference>
<dbReference type="InterPro" id="IPR000640">
    <property type="entry name" value="EFG_V-like"/>
</dbReference>
<dbReference type="InterPro" id="IPR004161">
    <property type="entry name" value="EFTu-like_2"/>
</dbReference>
<dbReference type="InterPro" id="IPR031157">
    <property type="entry name" value="G_TR_CS"/>
</dbReference>
<dbReference type="InterPro" id="IPR027417">
    <property type="entry name" value="P-loop_NTPase"/>
</dbReference>
<dbReference type="InterPro" id="IPR020568">
    <property type="entry name" value="Ribosomal_Su5_D2-typ_SF"/>
</dbReference>
<dbReference type="InterPro" id="IPR014721">
    <property type="entry name" value="Ribsml_uS5_D2-typ_fold_subgr"/>
</dbReference>
<dbReference type="InterPro" id="IPR005225">
    <property type="entry name" value="Small_GTP-bd"/>
</dbReference>
<dbReference type="InterPro" id="IPR000795">
    <property type="entry name" value="T_Tr_GTP-bd_dom"/>
</dbReference>
<dbReference type="InterPro" id="IPR009000">
    <property type="entry name" value="Transl_B-barrel_sf"/>
</dbReference>
<dbReference type="InterPro" id="IPR004540">
    <property type="entry name" value="Transl_elong_EFG/EF2"/>
</dbReference>
<dbReference type="InterPro" id="IPR005517">
    <property type="entry name" value="Transl_elong_EFG/EF2_IV"/>
</dbReference>
<dbReference type="NCBIfam" id="TIGR00484">
    <property type="entry name" value="EF-G"/>
    <property type="match status" value="1"/>
</dbReference>
<dbReference type="NCBIfam" id="NF009379">
    <property type="entry name" value="PRK12740.1-3"/>
    <property type="match status" value="1"/>
</dbReference>
<dbReference type="NCBIfam" id="NF009381">
    <property type="entry name" value="PRK12740.1-5"/>
    <property type="match status" value="1"/>
</dbReference>
<dbReference type="NCBIfam" id="TIGR00231">
    <property type="entry name" value="small_GTP"/>
    <property type="match status" value="1"/>
</dbReference>
<dbReference type="PANTHER" id="PTHR43261:SF1">
    <property type="entry name" value="RIBOSOME-RELEASING FACTOR 2, MITOCHONDRIAL"/>
    <property type="match status" value="1"/>
</dbReference>
<dbReference type="PANTHER" id="PTHR43261">
    <property type="entry name" value="TRANSLATION ELONGATION FACTOR G-RELATED"/>
    <property type="match status" value="1"/>
</dbReference>
<dbReference type="Pfam" id="PF00679">
    <property type="entry name" value="EFG_C"/>
    <property type="match status" value="1"/>
</dbReference>
<dbReference type="Pfam" id="PF14492">
    <property type="entry name" value="EFG_III"/>
    <property type="match status" value="1"/>
</dbReference>
<dbReference type="Pfam" id="PF03764">
    <property type="entry name" value="EFG_IV"/>
    <property type="match status" value="1"/>
</dbReference>
<dbReference type="Pfam" id="PF00009">
    <property type="entry name" value="GTP_EFTU"/>
    <property type="match status" value="1"/>
</dbReference>
<dbReference type="Pfam" id="PF03144">
    <property type="entry name" value="GTP_EFTU_D2"/>
    <property type="match status" value="1"/>
</dbReference>
<dbReference type="PRINTS" id="PR00315">
    <property type="entry name" value="ELONGATNFCT"/>
</dbReference>
<dbReference type="SMART" id="SM00838">
    <property type="entry name" value="EFG_C"/>
    <property type="match status" value="1"/>
</dbReference>
<dbReference type="SMART" id="SM00889">
    <property type="entry name" value="EFG_IV"/>
    <property type="match status" value="1"/>
</dbReference>
<dbReference type="SUPFAM" id="SSF54980">
    <property type="entry name" value="EF-G C-terminal domain-like"/>
    <property type="match status" value="2"/>
</dbReference>
<dbReference type="SUPFAM" id="SSF52540">
    <property type="entry name" value="P-loop containing nucleoside triphosphate hydrolases"/>
    <property type="match status" value="1"/>
</dbReference>
<dbReference type="SUPFAM" id="SSF54211">
    <property type="entry name" value="Ribosomal protein S5 domain 2-like"/>
    <property type="match status" value="1"/>
</dbReference>
<dbReference type="SUPFAM" id="SSF50447">
    <property type="entry name" value="Translation proteins"/>
    <property type="match status" value="1"/>
</dbReference>
<dbReference type="PROSITE" id="PS00301">
    <property type="entry name" value="G_TR_1"/>
    <property type="match status" value="1"/>
</dbReference>
<dbReference type="PROSITE" id="PS51722">
    <property type="entry name" value="G_TR_2"/>
    <property type="match status" value="1"/>
</dbReference>
<protein>
    <recommendedName>
        <fullName evidence="1">Elongation factor G</fullName>
        <shortName evidence="1">EF-G</shortName>
    </recommendedName>
</protein>